<evidence type="ECO:0000255" key="1">
    <source>
        <dbReference type="HAMAP-Rule" id="MF_00036"/>
    </source>
</evidence>
<keyword id="KW-0030">Aminoacyl-tRNA synthetase</keyword>
<keyword id="KW-0067">ATP-binding</keyword>
<keyword id="KW-0963">Cytoplasm</keyword>
<keyword id="KW-0436">Ligase</keyword>
<keyword id="KW-0479">Metal-binding</keyword>
<keyword id="KW-0547">Nucleotide-binding</keyword>
<keyword id="KW-0648">Protein biosynthesis</keyword>
<keyword id="KW-1185">Reference proteome</keyword>
<keyword id="KW-0694">RNA-binding</keyword>
<keyword id="KW-0820">tRNA-binding</keyword>
<keyword id="KW-0862">Zinc</keyword>
<name>SYA_SYNY3</name>
<accession>P74423</accession>
<dbReference type="EC" id="6.1.1.7" evidence="1"/>
<dbReference type="EMBL" id="BA000022">
    <property type="protein sequence ID" value="BAA18523.1"/>
    <property type="molecule type" value="Genomic_DNA"/>
</dbReference>
<dbReference type="PIR" id="S76394">
    <property type="entry name" value="S76394"/>
</dbReference>
<dbReference type="SMR" id="P74423"/>
<dbReference type="DIP" id="DIP-48800N"/>
<dbReference type="FunCoup" id="P74423">
    <property type="interactions" value="507"/>
</dbReference>
<dbReference type="IntAct" id="P74423">
    <property type="interactions" value="2"/>
</dbReference>
<dbReference type="STRING" id="1148.gene:10499404"/>
<dbReference type="PaxDb" id="1148-1653611"/>
<dbReference type="EnsemblBacteria" id="BAA18523">
    <property type="protein sequence ID" value="BAA18523"/>
    <property type="gene ID" value="BAA18523"/>
</dbReference>
<dbReference type="KEGG" id="syn:sll0362"/>
<dbReference type="eggNOG" id="COG0013">
    <property type="taxonomic scope" value="Bacteria"/>
</dbReference>
<dbReference type="InParanoid" id="P74423"/>
<dbReference type="PhylomeDB" id="P74423"/>
<dbReference type="Proteomes" id="UP000001425">
    <property type="component" value="Chromosome"/>
</dbReference>
<dbReference type="GO" id="GO:0005829">
    <property type="term" value="C:cytosol"/>
    <property type="evidence" value="ECO:0000318"/>
    <property type="project" value="GO_Central"/>
</dbReference>
<dbReference type="GO" id="GO:0004813">
    <property type="term" value="F:alanine-tRNA ligase activity"/>
    <property type="evidence" value="ECO:0000318"/>
    <property type="project" value="GO_Central"/>
</dbReference>
<dbReference type="GO" id="GO:0002161">
    <property type="term" value="F:aminoacyl-tRNA deacylase activity"/>
    <property type="evidence" value="ECO:0000318"/>
    <property type="project" value="GO_Central"/>
</dbReference>
<dbReference type="GO" id="GO:0005524">
    <property type="term" value="F:ATP binding"/>
    <property type="evidence" value="ECO:0007669"/>
    <property type="project" value="UniProtKB-UniRule"/>
</dbReference>
<dbReference type="GO" id="GO:0000049">
    <property type="term" value="F:tRNA binding"/>
    <property type="evidence" value="ECO:0007669"/>
    <property type="project" value="UniProtKB-KW"/>
</dbReference>
<dbReference type="GO" id="GO:0008270">
    <property type="term" value="F:zinc ion binding"/>
    <property type="evidence" value="ECO:0007669"/>
    <property type="project" value="UniProtKB-UniRule"/>
</dbReference>
<dbReference type="GO" id="GO:0006419">
    <property type="term" value="P:alanyl-tRNA aminoacylation"/>
    <property type="evidence" value="ECO:0000318"/>
    <property type="project" value="GO_Central"/>
</dbReference>
<dbReference type="CDD" id="cd00673">
    <property type="entry name" value="AlaRS_core"/>
    <property type="match status" value="1"/>
</dbReference>
<dbReference type="FunFam" id="3.10.310.40:FF:000001">
    <property type="entry name" value="Alanine--tRNA ligase"/>
    <property type="match status" value="1"/>
</dbReference>
<dbReference type="FunFam" id="3.30.54.20:FF:000001">
    <property type="entry name" value="Alanine--tRNA ligase"/>
    <property type="match status" value="1"/>
</dbReference>
<dbReference type="FunFam" id="3.30.930.10:FF:000004">
    <property type="entry name" value="Alanine--tRNA ligase"/>
    <property type="match status" value="1"/>
</dbReference>
<dbReference type="FunFam" id="3.30.980.10:FF:000004">
    <property type="entry name" value="Alanine--tRNA ligase, cytoplasmic"/>
    <property type="match status" value="1"/>
</dbReference>
<dbReference type="FunFam" id="2.40.30.130:FF:000007">
    <property type="entry name" value="Probable alanine--tRNA ligase, chloroplastic"/>
    <property type="match status" value="1"/>
</dbReference>
<dbReference type="Gene3D" id="2.40.30.130">
    <property type="match status" value="1"/>
</dbReference>
<dbReference type="Gene3D" id="3.10.310.40">
    <property type="match status" value="1"/>
</dbReference>
<dbReference type="Gene3D" id="3.30.54.20">
    <property type="match status" value="1"/>
</dbReference>
<dbReference type="Gene3D" id="6.10.250.550">
    <property type="match status" value="1"/>
</dbReference>
<dbReference type="Gene3D" id="3.30.930.10">
    <property type="entry name" value="Bira Bifunctional Protein, Domain 2"/>
    <property type="match status" value="1"/>
</dbReference>
<dbReference type="Gene3D" id="3.30.980.10">
    <property type="entry name" value="Threonyl-trna Synthetase, Chain A, domain 2"/>
    <property type="match status" value="1"/>
</dbReference>
<dbReference type="HAMAP" id="MF_00036_B">
    <property type="entry name" value="Ala_tRNA_synth_B"/>
    <property type="match status" value="1"/>
</dbReference>
<dbReference type="InterPro" id="IPR045864">
    <property type="entry name" value="aa-tRNA-synth_II/BPL/LPL"/>
</dbReference>
<dbReference type="InterPro" id="IPR002318">
    <property type="entry name" value="Ala-tRNA-lgiase_IIc"/>
</dbReference>
<dbReference type="InterPro" id="IPR018162">
    <property type="entry name" value="Ala-tRNA-ligase_IIc_anticod-bd"/>
</dbReference>
<dbReference type="InterPro" id="IPR018165">
    <property type="entry name" value="Ala-tRNA-synth_IIc_core"/>
</dbReference>
<dbReference type="InterPro" id="IPR018164">
    <property type="entry name" value="Ala-tRNA-synth_IIc_N"/>
</dbReference>
<dbReference type="InterPro" id="IPR050058">
    <property type="entry name" value="Ala-tRNA_ligase"/>
</dbReference>
<dbReference type="InterPro" id="IPR023033">
    <property type="entry name" value="Ala_tRNA_ligase_euk/bac"/>
</dbReference>
<dbReference type="InterPro" id="IPR003156">
    <property type="entry name" value="DHHA1_dom"/>
</dbReference>
<dbReference type="InterPro" id="IPR018163">
    <property type="entry name" value="Thr/Ala-tRNA-synth_IIc_edit"/>
</dbReference>
<dbReference type="InterPro" id="IPR009000">
    <property type="entry name" value="Transl_B-barrel_sf"/>
</dbReference>
<dbReference type="InterPro" id="IPR012947">
    <property type="entry name" value="tRNA_SAD"/>
</dbReference>
<dbReference type="NCBIfam" id="TIGR00344">
    <property type="entry name" value="alaS"/>
    <property type="match status" value="1"/>
</dbReference>
<dbReference type="PANTHER" id="PTHR11777:SF9">
    <property type="entry name" value="ALANINE--TRNA LIGASE, CYTOPLASMIC"/>
    <property type="match status" value="1"/>
</dbReference>
<dbReference type="PANTHER" id="PTHR11777">
    <property type="entry name" value="ALANYL-TRNA SYNTHETASE"/>
    <property type="match status" value="1"/>
</dbReference>
<dbReference type="Pfam" id="PF02272">
    <property type="entry name" value="DHHA1"/>
    <property type="match status" value="1"/>
</dbReference>
<dbReference type="Pfam" id="PF01411">
    <property type="entry name" value="tRNA-synt_2c"/>
    <property type="match status" value="1"/>
</dbReference>
<dbReference type="Pfam" id="PF07973">
    <property type="entry name" value="tRNA_SAD"/>
    <property type="match status" value="1"/>
</dbReference>
<dbReference type="PRINTS" id="PR00980">
    <property type="entry name" value="TRNASYNTHALA"/>
</dbReference>
<dbReference type="SMART" id="SM00863">
    <property type="entry name" value="tRNA_SAD"/>
    <property type="match status" value="1"/>
</dbReference>
<dbReference type="SUPFAM" id="SSF55681">
    <property type="entry name" value="Class II aaRS and biotin synthetases"/>
    <property type="match status" value="1"/>
</dbReference>
<dbReference type="SUPFAM" id="SSF101353">
    <property type="entry name" value="Putative anticodon-binding domain of alanyl-tRNA synthetase (AlaRS)"/>
    <property type="match status" value="1"/>
</dbReference>
<dbReference type="SUPFAM" id="SSF55186">
    <property type="entry name" value="ThrRS/AlaRS common domain"/>
    <property type="match status" value="1"/>
</dbReference>
<dbReference type="SUPFAM" id="SSF50447">
    <property type="entry name" value="Translation proteins"/>
    <property type="match status" value="1"/>
</dbReference>
<dbReference type="PROSITE" id="PS50860">
    <property type="entry name" value="AA_TRNA_LIGASE_II_ALA"/>
    <property type="match status" value="1"/>
</dbReference>
<reference key="1">
    <citation type="journal article" date="1996" name="DNA Res.">
        <title>Sequence analysis of the genome of the unicellular cyanobacterium Synechocystis sp. strain PCC6803. II. Sequence determination of the entire genome and assignment of potential protein-coding regions.</title>
        <authorList>
            <person name="Kaneko T."/>
            <person name="Sato S."/>
            <person name="Kotani H."/>
            <person name="Tanaka A."/>
            <person name="Asamizu E."/>
            <person name="Nakamura Y."/>
            <person name="Miyajima N."/>
            <person name="Hirosawa M."/>
            <person name="Sugiura M."/>
            <person name="Sasamoto S."/>
            <person name="Kimura T."/>
            <person name="Hosouchi T."/>
            <person name="Matsuno A."/>
            <person name="Muraki A."/>
            <person name="Nakazaki N."/>
            <person name="Naruo K."/>
            <person name="Okumura S."/>
            <person name="Shimpo S."/>
            <person name="Takeuchi C."/>
            <person name="Wada T."/>
            <person name="Watanabe A."/>
            <person name="Yamada M."/>
            <person name="Yasuda M."/>
            <person name="Tabata S."/>
        </authorList>
    </citation>
    <scope>NUCLEOTIDE SEQUENCE [LARGE SCALE GENOMIC DNA]</scope>
    <source>
        <strain>ATCC 27184 / PCC 6803 / Kazusa</strain>
    </source>
</reference>
<gene>
    <name evidence="1" type="primary">alaS</name>
    <name type="ordered locus">sll0362</name>
</gene>
<comment type="function">
    <text evidence="1">Catalyzes the attachment of alanine to tRNA(Ala) in a two-step reaction: alanine is first activated by ATP to form Ala-AMP and then transferred to the acceptor end of tRNA(Ala). Also edits incorrectly charged Ser-tRNA(Ala) and Gly-tRNA(Ala) via its editing domain.</text>
</comment>
<comment type="catalytic activity">
    <reaction evidence="1">
        <text>tRNA(Ala) + L-alanine + ATP = L-alanyl-tRNA(Ala) + AMP + diphosphate</text>
        <dbReference type="Rhea" id="RHEA:12540"/>
        <dbReference type="Rhea" id="RHEA-COMP:9657"/>
        <dbReference type="Rhea" id="RHEA-COMP:9923"/>
        <dbReference type="ChEBI" id="CHEBI:30616"/>
        <dbReference type="ChEBI" id="CHEBI:33019"/>
        <dbReference type="ChEBI" id="CHEBI:57972"/>
        <dbReference type="ChEBI" id="CHEBI:78442"/>
        <dbReference type="ChEBI" id="CHEBI:78497"/>
        <dbReference type="ChEBI" id="CHEBI:456215"/>
        <dbReference type="EC" id="6.1.1.7"/>
    </reaction>
</comment>
<comment type="cofactor">
    <cofactor evidence="1">
        <name>Zn(2+)</name>
        <dbReference type="ChEBI" id="CHEBI:29105"/>
    </cofactor>
    <text evidence="1">Binds 1 zinc ion per subunit.</text>
</comment>
<comment type="subcellular location">
    <subcellularLocation>
        <location evidence="1">Cytoplasm</location>
    </subcellularLocation>
</comment>
<comment type="domain">
    <text evidence="1">Consists of three domains; the N-terminal catalytic domain, the editing domain and the C-terminal C-Ala domain. The editing domain removes incorrectly charged amino acids, while the C-Ala domain, along with tRNA(Ala), serves as a bridge to cooperatively bring together the editing and aminoacylation centers thus stimulating deacylation of misacylated tRNAs.</text>
</comment>
<comment type="similarity">
    <text evidence="1">Belongs to the class-II aminoacyl-tRNA synthetase family.</text>
</comment>
<protein>
    <recommendedName>
        <fullName evidence="1">Alanine--tRNA ligase</fullName>
        <ecNumber evidence="1">6.1.1.7</ecNumber>
    </recommendedName>
    <alternativeName>
        <fullName evidence="1">Alanyl-tRNA synthetase</fullName>
        <shortName evidence="1">AlaRS</shortName>
    </alternativeName>
</protein>
<sequence>MTTTPPVLSGPEIRQQFLNFFADRQHQILPSASLVPEDPTVLLTIAGMLPFKPIFLGQKSAEFPRATTSQKCIRTNDIENVGRTARHHTFFEMLGNFSFGDYFKSQAIAWAWELSTQVFKLPAERLVVSVFEEDDEAFAIWRDEIGIPAHRIQRMGADDNFWVSGPTGPCGPCSEIYYDFHPELGDEKLDLEDDSRFIEFYNLVFMQYNRDNAGNLTPLEKKNIDTGMGLERMAQILQKVPNNYETDLIFPIIQTAANIAGIDYAQANEKTKVSLKVIGDHVRSVVHMIADGISASNLGRGYVLRRLIRRVVRHGRLLGINGEFTTKVAATAVQLAQPVYPNVLERQSLIEQELQREEAAFLKTLERGEKLLADLMADGVTEIAGADAFTLYDTFGFPLELTQEIAEEQGITVDVEGFEKAMQEQQERSKAAHETIDLTVQESLDKLANHIHPTEFLGYTDLQSSAIVKAVLVGGELVDQAVAGQTVQIVLDQTPFYGESGGQIGDKGFLNGDNLLIRIEDVKRESGIFIHFGRVERGTVQIGTTITATIDRACRRRAQANHTATHLLQSALKRVVDEGISQAGSLVDFNRLRFDFNSPRAVTMEELQQIEDLINQWIAEAHQTEVAVMPIADAKAKGAIAMFGEKYGAEVRVIDVPGVSLELCGGTHVANTAEIGLFKIVAETGIAAGVRRIEAVAGPSVLDYLNVREAVVKELGDRLKAKPEEIPDRVHQLQQELKASQKQLEALKQELALQKSEQLLTQAQTVGEFKILVADLGTVDGESLKTAAERLQQKLGESAVVLASIPEEGKVSLVAAFSPQLVKTKQLKAGQFIGAIAKICGGGGGGRPNLAQAGGRDASKLPEALATAKQTLLAELG</sequence>
<proteinExistence type="inferred from homology"/>
<feature type="chain" id="PRO_0000075229" description="Alanine--tRNA ligase">
    <location>
        <begin position="1"/>
        <end position="877"/>
    </location>
</feature>
<feature type="binding site" evidence="1">
    <location>
        <position position="562"/>
    </location>
    <ligand>
        <name>Zn(2+)</name>
        <dbReference type="ChEBI" id="CHEBI:29105"/>
    </ligand>
</feature>
<feature type="binding site" evidence="1">
    <location>
        <position position="566"/>
    </location>
    <ligand>
        <name>Zn(2+)</name>
        <dbReference type="ChEBI" id="CHEBI:29105"/>
    </ligand>
</feature>
<feature type="binding site" evidence="1">
    <location>
        <position position="664"/>
    </location>
    <ligand>
        <name>Zn(2+)</name>
        <dbReference type="ChEBI" id="CHEBI:29105"/>
    </ligand>
</feature>
<feature type="binding site" evidence="1">
    <location>
        <position position="668"/>
    </location>
    <ligand>
        <name>Zn(2+)</name>
        <dbReference type="ChEBI" id="CHEBI:29105"/>
    </ligand>
</feature>
<organism>
    <name type="scientific">Synechocystis sp. (strain ATCC 27184 / PCC 6803 / Kazusa)</name>
    <dbReference type="NCBI Taxonomy" id="1111708"/>
    <lineage>
        <taxon>Bacteria</taxon>
        <taxon>Bacillati</taxon>
        <taxon>Cyanobacteriota</taxon>
        <taxon>Cyanophyceae</taxon>
        <taxon>Synechococcales</taxon>
        <taxon>Merismopediaceae</taxon>
        <taxon>Synechocystis</taxon>
    </lineage>
</organism>